<proteinExistence type="inferred from homology"/>
<name>PFDB_METTP</name>
<protein>
    <recommendedName>
        <fullName evidence="1">Prefoldin subunit beta</fullName>
    </recommendedName>
    <alternativeName>
        <fullName evidence="1">GimC subunit beta</fullName>
    </alternativeName>
</protein>
<reference key="1">
    <citation type="submission" date="2006-10" db="EMBL/GenBank/DDBJ databases">
        <title>Complete sequence of Methanosaeta thermophila PT.</title>
        <authorList>
            <consortium name="US DOE Joint Genome Institute"/>
            <person name="Copeland A."/>
            <person name="Lucas S."/>
            <person name="Lapidus A."/>
            <person name="Barry K."/>
            <person name="Detter J.C."/>
            <person name="Glavina del Rio T."/>
            <person name="Hammon N."/>
            <person name="Israni S."/>
            <person name="Pitluck S."/>
            <person name="Chain P."/>
            <person name="Malfatti S."/>
            <person name="Shin M."/>
            <person name="Vergez L."/>
            <person name="Schmutz J."/>
            <person name="Larimer F."/>
            <person name="Land M."/>
            <person name="Hauser L."/>
            <person name="Kyrpides N."/>
            <person name="Kim E."/>
            <person name="Smith K.S."/>
            <person name="Ingram-Smith C."/>
            <person name="Richardson P."/>
        </authorList>
    </citation>
    <scope>NUCLEOTIDE SEQUENCE [LARGE SCALE GENOMIC DNA]</scope>
    <source>
        <strain>DSM 6194 / JCM 14653 / NBRC 101360 / PT</strain>
    </source>
</reference>
<accession>A0B8V8</accession>
<feature type="chain" id="PRO_0000300775" description="Prefoldin subunit beta">
    <location>
        <begin position="1"/>
        <end position="120"/>
    </location>
</feature>
<keyword id="KW-0143">Chaperone</keyword>
<keyword id="KW-0963">Cytoplasm</keyword>
<keyword id="KW-1185">Reference proteome</keyword>
<gene>
    <name evidence="1" type="primary">pfdB</name>
    <name type="ordered locus">Mthe_1357</name>
</gene>
<evidence type="ECO:0000255" key="1">
    <source>
        <dbReference type="HAMAP-Rule" id="MF_00307"/>
    </source>
</evidence>
<dbReference type="EMBL" id="CP000477">
    <property type="protein sequence ID" value="ABK15132.1"/>
    <property type="molecule type" value="Genomic_DNA"/>
</dbReference>
<dbReference type="RefSeq" id="WP_011696524.1">
    <property type="nucleotide sequence ID" value="NC_008553.1"/>
</dbReference>
<dbReference type="SMR" id="A0B8V8"/>
<dbReference type="STRING" id="349307.Mthe_1357"/>
<dbReference type="GeneID" id="4462853"/>
<dbReference type="KEGG" id="mtp:Mthe_1357"/>
<dbReference type="HOGENOM" id="CLU_131909_0_1_2"/>
<dbReference type="OrthoDB" id="204796at2157"/>
<dbReference type="Proteomes" id="UP000000674">
    <property type="component" value="Chromosome"/>
</dbReference>
<dbReference type="GO" id="GO:0005737">
    <property type="term" value="C:cytoplasm"/>
    <property type="evidence" value="ECO:0007669"/>
    <property type="project" value="UniProtKB-SubCell"/>
</dbReference>
<dbReference type="GO" id="GO:0016272">
    <property type="term" value="C:prefoldin complex"/>
    <property type="evidence" value="ECO:0007669"/>
    <property type="project" value="UniProtKB-UniRule"/>
</dbReference>
<dbReference type="GO" id="GO:0051087">
    <property type="term" value="F:protein-folding chaperone binding"/>
    <property type="evidence" value="ECO:0007669"/>
    <property type="project" value="TreeGrafter"/>
</dbReference>
<dbReference type="GO" id="GO:0051082">
    <property type="term" value="F:unfolded protein binding"/>
    <property type="evidence" value="ECO:0007669"/>
    <property type="project" value="UniProtKB-UniRule"/>
</dbReference>
<dbReference type="GO" id="GO:0051131">
    <property type="term" value="P:chaperone-mediated protein complex assembly"/>
    <property type="evidence" value="ECO:0007669"/>
    <property type="project" value="TreeGrafter"/>
</dbReference>
<dbReference type="GO" id="GO:0006457">
    <property type="term" value="P:protein folding"/>
    <property type="evidence" value="ECO:0007669"/>
    <property type="project" value="UniProtKB-UniRule"/>
</dbReference>
<dbReference type="CDD" id="cd23162">
    <property type="entry name" value="Prefoldin_beta_GimC"/>
    <property type="match status" value="1"/>
</dbReference>
<dbReference type="Gene3D" id="1.10.287.370">
    <property type="match status" value="1"/>
</dbReference>
<dbReference type="HAMAP" id="MF_00307">
    <property type="entry name" value="PfdB"/>
    <property type="match status" value="1"/>
</dbReference>
<dbReference type="InterPro" id="IPR002777">
    <property type="entry name" value="PFD_beta-like"/>
</dbReference>
<dbReference type="InterPro" id="IPR012713">
    <property type="entry name" value="PfdB"/>
</dbReference>
<dbReference type="InterPro" id="IPR009053">
    <property type="entry name" value="Prefoldin"/>
</dbReference>
<dbReference type="NCBIfam" id="TIGR02338">
    <property type="entry name" value="gimC_beta"/>
    <property type="match status" value="1"/>
</dbReference>
<dbReference type="PANTHER" id="PTHR21431">
    <property type="entry name" value="PREFOLDIN SUBUNIT 6"/>
    <property type="match status" value="1"/>
</dbReference>
<dbReference type="PANTHER" id="PTHR21431:SF0">
    <property type="entry name" value="PREFOLDIN SUBUNIT 6"/>
    <property type="match status" value="1"/>
</dbReference>
<dbReference type="Pfam" id="PF01920">
    <property type="entry name" value="Prefoldin_2"/>
    <property type="match status" value="1"/>
</dbReference>
<dbReference type="SUPFAM" id="SSF46579">
    <property type="entry name" value="Prefoldin"/>
    <property type="match status" value="1"/>
</dbReference>
<sequence length="120" mass="13621">MSGELPPQVQNQLAQLQQLQQQAQALVAQKSQIELLKKEAEAAIKELDKSPDDVVVYKNVGELMLRSDKATLMTELKERVDLLDLRLKTVAKQEERIQSRFNQLQDQLRQSLGQMPPRGG</sequence>
<organism>
    <name type="scientific">Methanothrix thermoacetophila (strain DSM 6194 / JCM 14653 / NBRC 101360 / PT)</name>
    <name type="common">Methanosaeta thermophila</name>
    <dbReference type="NCBI Taxonomy" id="349307"/>
    <lineage>
        <taxon>Archaea</taxon>
        <taxon>Methanobacteriati</taxon>
        <taxon>Methanobacteriota</taxon>
        <taxon>Stenosarchaea group</taxon>
        <taxon>Methanomicrobia</taxon>
        <taxon>Methanotrichales</taxon>
        <taxon>Methanotrichaceae</taxon>
        <taxon>Methanothrix</taxon>
    </lineage>
</organism>
<comment type="function">
    <text evidence="1">Molecular chaperone capable of stabilizing a range of proteins. Seems to fulfill an ATP-independent, HSP70-like function in archaeal de novo protein folding.</text>
</comment>
<comment type="subunit">
    <text evidence="1">Heterohexamer of two alpha and four beta subunits.</text>
</comment>
<comment type="subcellular location">
    <subcellularLocation>
        <location evidence="1">Cytoplasm</location>
    </subcellularLocation>
</comment>
<comment type="similarity">
    <text evidence="1">Belongs to the prefoldin subunit beta family.</text>
</comment>